<evidence type="ECO:0000255" key="1">
    <source>
        <dbReference type="HAMAP-Rule" id="MF_01017"/>
    </source>
</evidence>
<comment type="catalytic activity">
    <reaction evidence="1">
        <text>a quinone + NADH + H(+) = a quinol + NAD(+)</text>
        <dbReference type="Rhea" id="RHEA:46160"/>
        <dbReference type="ChEBI" id="CHEBI:15378"/>
        <dbReference type="ChEBI" id="CHEBI:24646"/>
        <dbReference type="ChEBI" id="CHEBI:57540"/>
        <dbReference type="ChEBI" id="CHEBI:57945"/>
        <dbReference type="ChEBI" id="CHEBI:132124"/>
        <dbReference type="EC" id="1.6.5.2"/>
    </reaction>
</comment>
<comment type="catalytic activity">
    <reaction evidence="1">
        <text>a quinone + NADPH + H(+) = a quinol + NADP(+)</text>
        <dbReference type="Rhea" id="RHEA:46164"/>
        <dbReference type="ChEBI" id="CHEBI:15378"/>
        <dbReference type="ChEBI" id="CHEBI:24646"/>
        <dbReference type="ChEBI" id="CHEBI:57783"/>
        <dbReference type="ChEBI" id="CHEBI:58349"/>
        <dbReference type="ChEBI" id="CHEBI:132124"/>
        <dbReference type="EC" id="1.6.5.2"/>
    </reaction>
</comment>
<comment type="cofactor">
    <cofactor evidence="1">
        <name>FMN</name>
        <dbReference type="ChEBI" id="CHEBI:58210"/>
    </cofactor>
    <text evidence="1">Binds 1 FMN per monomer.</text>
</comment>
<comment type="similarity">
    <text evidence="1">Belongs to the WrbA family.</text>
</comment>
<accession>B2T8L2</accession>
<keyword id="KW-0285">Flavoprotein</keyword>
<keyword id="KW-0288">FMN</keyword>
<keyword id="KW-0520">NAD</keyword>
<keyword id="KW-0521">NADP</keyword>
<keyword id="KW-0547">Nucleotide-binding</keyword>
<keyword id="KW-0560">Oxidoreductase</keyword>
<proteinExistence type="inferred from homology"/>
<organism>
    <name type="scientific">Paraburkholderia phytofirmans (strain DSM 17436 / LMG 22146 / PsJN)</name>
    <name type="common">Burkholderia phytofirmans</name>
    <dbReference type="NCBI Taxonomy" id="398527"/>
    <lineage>
        <taxon>Bacteria</taxon>
        <taxon>Pseudomonadati</taxon>
        <taxon>Pseudomonadota</taxon>
        <taxon>Betaproteobacteria</taxon>
        <taxon>Burkholderiales</taxon>
        <taxon>Burkholderiaceae</taxon>
        <taxon>Paraburkholderia</taxon>
    </lineage>
</organism>
<dbReference type="EC" id="1.6.5.2" evidence="1"/>
<dbReference type="EMBL" id="CP001053">
    <property type="protein sequence ID" value="ACD20675.1"/>
    <property type="molecule type" value="Genomic_DNA"/>
</dbReference>
<dbReference type="RefSeq" id="WP_012428183.1">
    <property type="nucleotide sequence ID" value="NC_010676.1"/>
</dbReference>
<dbReference type="SMR" id="B2T8L2"/>
<dbReference type="STRING" id="398527.Bphyt_6351"/>
<dbReference type="KEGG" id="bpy:Bphyt_6351"/>
<dbReference type="eggNOG" id="COG0655">
    <property type="taxonomic scope" value="Bacteria"/>
</dbReference>
<dbReference type="HOGENOM" id="CLU_051402_0_2_4"/>
<dbReference type="OrthoDB" id="9801479at2"/>
<dbReference type="Proteomes" id="UP000001739">
    <property type="component" value="Chromosome 2"/>
</dbReference>
<dbReference type="GO" id="GO:0016020">
    <property type="term" value="C:membrane"/>
    <property type="evidence" value="ECO:0007669"/>
    <property type="project" value="TreeGrafter"/>
</dbReference>
<dbReference type="GO" id="GO:0050660">
    <property type="term" value="F:flavin adenine dinucleotide binding"/>
    <property type="evidence" value="ECO:0007669"/>
    <property type="project" value="UniProtKB-UniRule"/>
</dbReference>
<dbReference type="GO" id="GO:0010181">
    <property type="term" value="F:FMN binding"/>
    <property type="evidence" value="ECO:0007669"/>
    <property type="project" value="InterPro"/>
</dbReference>
<dbReference type="GO" id="GO:0051287">
    <property type="term" value="F:NAD binding"/>
    <property type="evidence" value="ECO:0007669"/>
    <property type="project" value="UniProtKB-UniRule"/>
</dbReference>
<dbReference type="GO" id="GO:0050136">
    <property type="term" value="F:NADH:ubiquinone reductase (non-electrogenic) activity"/>
    <property type="evidence" value="ECO:0007669"/>
    <property type="project" value="RHEA"/>
</dbReference>
<dbReference type="GO" id="GO:0050661">
    <property type="term" value="F:NADP binding"/>
    <property type="evidence" value="ECO:0007669"/>
    <property type="project" value="UniProtKB-UniRule"/>
</dbReference>
<dbReference type="GO" id="GO:0008753">
    <property type="term" value="F:NADPH dehydrogenase (quinone) activity"/>
    <property type="evidence" value="ECO:0007669"/>
    <property type="project" value="RHEA"/>
</dbReference>
<dbReference type="FunFam" id="3.40.50.360:FF:000001">
    <property type="entry name" value="NAD(P)H dehydrogenase (Quinone) FQR1-like"/>
    <property type="match status" value="1"/>
</dbReference>
<dbReference type="Gene3D" id="3.40.50.360">
    <property type="match status" value="1"/>
</dbReference>
<dbReference type="HAMAP" id="MF_01017">
    <property type="entry name" value="NQOR"/>
    <property type="match status" value="1"/>
</dbReference>
<dbReference type="InterPro" id="IPR008254">
    <property type="entry name" value="Flavodoxin/NO_synth"/>
</dbReference>
<dbReference type="InterPro" id="IPR029039">
    <property type="entry name" value="Flavoprotein-like_sf"/>
</dbReference>
<dbReference type="InterPro" id="IPR010089">
    <property type="entry name" value="Flavoprotein_WrbA-like"/>
</dbReference>
<dbReference type="InterPro" id="IPR005025">
    <property type="entry name" value="FMN_Rdtase-like_dom"/>
</dbReference>
<dbReference type="InterPro" id="IPR037513">
    <property type="entry name" value="NQO"/>
</dbReference>
<dbReference type="NCBIfam" id="TIGR01755">
    <property type="entry name" value="flav_wrbA"/>
    <property type="match status" value="1"/>
</dbReference>
<dbReference type="NCBIfam" id="NF002999">
    <property type="entry name" value="PRK03767.1"/>
    <property type="match status" value="1"/>
</dbReference>
<dbReference type="PANTHER" id="PTHR30546">
    <property type="entry name" value="FLAVODOXIN-RELATED PROTEIN WRBA-RELATED"/>
    <property type="match status" value="1"/>
</dbReference>
<dbReference type="PANTHER" id="PTHR30546:SF23">
    <property type="entry name" value="FLAVOPROTEIN-LIKE PROTEIN YCP4-RELATED"/>
    <property type="match status" value="1"/>
</dbReference>
<dbReference type="Pfam" id="PF03358">
    <property type="entry name" value="FMN_red"/>
    <property type="match status" value="1"/>
</dbReference>
<dbReference type="SUPFAM" id="SSF52218">
    <property type="entry name" value="Flavoproteins"/>
    <property type="match status" value="1"/>
</dbReference>
<dbReference type="PROSITE" id="PS50902">
    <property type="entry name" value="FLAVODOXIN_LIKE"/>
    <property type="match status" value="1"/>
</dbReference>
<sequence>MAKVLVLYYSMYGHIETMADAVAEGARSVPGTEVTIKRVAETIPADQAAAHGVKLDQKAPVATPDELANYDAIIFGTPTRFGNMAGQMRTFLDQTGGLWMKGALVGKIGSVFASTGTQHGGQETTITSFHSTLLHQGMVIVGVPYSCAGLVNMTEITGGTPYGATTLAGADGSRQPSQNELDIARFQGKHVASLALKIAG</sequence>
<name>NQOR_PARPJ</name>
<reference key="1">
    <citation type="journal article" date="2011" name="J. Bacteriol.">
        <title>Complete genome sequence of the plant growth-promoting endophyte Burkholderia phytofirmans strain PsJN.</title>
        <authorList>
            <person name="Weilharter A."/>
            <person name="Mitter B."/>
            <person name="Shin M.V."/>
            <person name="Chain P.S."/>
            <person name="Nowak J."/>
            <person name="Sessitsch A."/>
        </authorList>
    </citation>
    <scope>NUCLEOTIDE SEQUENCE [LARGE SCALE GENOMIC DNA]</scope>
    <source>
        <strain>DSM 17436 / LMG 22146 / PsJN</strain>
    </source>
</reference>
<feature type="chain" id="PRO_1000200621" description="NAD(P)H dehydrogenase (quinone)">
    <location>
        <begin position="1"/>
        <end position="200"/>
    </location>
</feature>
<feature type="domain" description="Flavodoxin-like" evidence="1">
    <location>
        <begin position="4"/>
        <end position="191"/>
    </location>
</feature>
<feature type="binding site" evidence="1">
    <location>
        <begin position="10"/>
        <end position="15"/>
    </location>
    <ligand>
        <name>FMN</name>
        <dbReference type="ChEBI" id="CHEBI:58210"/>
    </ligand>
</feature>
<feature type="binding site" evidence="1">
    <location>
        <position position="12"/>
    </location>
    <ligand>
        <name>NAD(+)</name>
        <dbReference type="ChEBI" id="CHEBI:57540"/>
    </ligand>
</feature>
<feature type="binding site" evidence="1">
    <location>
        <begin position="79"/>
        <end position="81"/>
    </location>
    <ligand>
        <name>FMN</name>
        <dbReference type="ChEBI" id="CHEBI:58210"/>
    </ligand>
</feature>
<feature type="binding site" evidence="1">
    <location>
        <position position="99"/>
    </location>
    <ligand>
        <name>substrate</name>
    </ligand>
</feature>
<feature type="binding site" evidence="1">
    <location>
        <begin position="114"/>
        <end position="120"/>
    </location>
    <ligand>
        <name>FMN</name>
        <dbReference type="ChEBI" id="CHEBI:58210"/>
    </ligand>
</feature>
<feature type="binding site" evidence="1">
    <location>
        <position position="135"/>
    </location>
    <ligand>
        <name>FMN</name>
        <dbReference type="ChEBI" id="CHEBI:58210"/>
    </ligand>
</feature>
<protein>
    <recommendedName>
        <fullName evidence="1">NAD(P)H dehydrogenase (quinone)</fullName>
        <ecNumber evidence="1">1.6.5.2</ecNumber>
    </recommendedName>
    <alternativeName>
        <fullName>Flavoprotein WrbA</fullName>
    </alternativeName>
    <alternativeName>
        <fullName evidence="1">NAD(P)H:quinone oxidoreductase</fullName>
        <shortName evidence="1">NQO</shortName>
    </alternativeName>
</protein>
<gene>
    <name type="ordered locus">Bphyt_6351</name>
</gene>